<protein>
    <recommendedName>
        <fullName evidence="1">Adenine deaminase</fullName>
        <shortName evidence="1">Adenase</shortName>
        <shortName evidence="1">Adenine aminase</shortName>
        <ecNumber evidence="1">3.5.4.2</ecNumber>
    </recommendedName>
</protein>
<name>ADEC_BACVZ</name>
<gene>
    <name evidence="1" type="primary">ade</name>
    <name type="ordered locus">RBAM_014260</name>
</gene>
<evidence type="ECO:0000255" key="1">
    <source>
        <dbReference type="HAMAP-Rule" id="MF_01518"/>
    </source>
</evidence>
<proteinExistence type="inferred from homology"/>
<reference key="1">
    <citation type="journal article" date="2007" name="Nat. Biotechnol.">
        <title>Comparative analysis of the complete genome sequence of the plant growth-promoting bacterium Bacillus amyloliquefaciens FZB42.</title>
        <authorList>
            <person name="Chen X.H."/>
            <person name="Koumoutsi A."/>
            <person name="Scholz R."/>
            <person name="Eisenreich A."/>
            <person name="Schneider K."/>
            <person name="Heinemeyer I."/>
            <person name="Morgenstern B."/>
            <person name="Voss B."/>
            <person name="Hess W.R."/>
            <person name="Reva O."/>
            <person name="Junge H."/>
            <person name="Voigt B."/>
            <person name="Jungblut P.R."/>
            <person name="Vater J."/>
            <person name="Suessmuth R."/>
            <person name="Liesegang H."/>
            <person name="Strittmatter A."/>
            <person name="Gottschalk G."/>
            <person name="Borriss R."/>
        </authorList>
    </citation>
    <scope>NUCLEOTIDE SEQUENCE [LARGE SCALE GENOMIC DNA]</scope>
    <source>
        <strain>DSM 23117 / BGSC 10A6 / LMG 26770 / FZB42</strain>
    </source>
</reference>
<comment type="catalytic activity">
    <reaction evidence="1">
        <text>adenine + H2O + H(+) = hypoxanthine + NH4(+)</text>
        <dbReference type="Rhea" id="RHEA:23688"/>
        <dbReference type="ChEBI" id="CHEBI:15377"/>
        <dbReference type="ChEBI" id="CHEBI:15378"/>
        <dbReference type="ChEBI" id="CHEBI:16708"/>
        <dbReference type="ChEBI" id="CHEBI:17368"/>
        <dbReference type="ChEBI" id="CHEBI:28938"/>
        <dbReference type="EC" id="3.5.4.2"/>
    </reaction>
</comment>
<comment type="cofactor">
    <cofactor evidence="1">
        <name>Mn(2+)</name>
        <dbReference type="ChEBI" id="CHEBI:29035"/>
    </cofactor>
</comment>
<comment type="similarity">
    <text evidence="1">Belongs to the metallo-dependent hydrolases superfamily. Adenine deaminase family.</text>
</comment>
<accession>A7Z463</accession>
<organism>
    <name type="scientific">Bacillus velezensis (strain DSM 23117 / BGSC 10A6 / LMG 26770 / FZB42)</name>
    <name type="common">Bacillus amyloliquefaciens subsp. plantarum</name>
    <dbReference type="NCBI Taxonomy" id="326423"/>
    <lineage>
        <taxon>Bacteria</taxon>
        <taxon>Bacillati</taxon>
        <taxon>Bacillota</taxon>
        <taxon>Bacilli</taxon>
        <taxon>Bacillales</taxon>
        <taxon>Bacillaceae</taxon>
        <taxon>Bacillus</taxon>
        <taxon>Bacillus amyloliquefaciens group</taxon>
    </lineage>
</organism>
<dbReference type="EC" id="3.5.4.2" evidence="1"/>
<dbReference type="EMBL" id="CP000560">
    <property type="protein sequence ID" value="ABS73789.1"/>
    <property type="molecule type" value="Genomic_DNA"/>
</dbReference>
<dbReference type="RefSeq" id="WP_012117460.1">
    <property type="nucleotide sequence ID" value="NC_009725.2"/>
</dbReference>
<dbReference type="SMR" id="A7Z463"/>
<dbReference type="GeneID" id="93080560"/>
<dbReference type="KEGG" id="bay:RBAM_014260"/>
<dbReference type="HOGENOM" id="CLU_027935_0_0_9"/>
<dbReference type="Proteomes" id="UP000001120">
    <property type="component" value="Chromosome"/>
</dbReference>
<dbReference type="GO" id="GO:0000034">
    <property type="term" value="F:adenine deaminase activity"/>
    <property type="evidence" value="ECO:0007669"/>
    <property type="project" value="UniProtKB-UniRule"/>
</dbReference>
<dbReference type="GO" id="GO:0006146">
    <property type="term" value="P:adenine catabolic process"/>
    <property type="evidence" value="ECO:0007669"/>
    <property type="project" value="InterPro"/>
</dbReference>
<dbReference type="CDD" id="cd01295">
    <property type="entry name" value="AdeC"/>
    <property type="match status" value="1"/>
</dbReference>
<dbReference type="FunFam" id="2.30.40.10:FF:000059">
    <property type="entry name" value="Adenine deaminase"/>
    <property type="match status" value="1"/>
</dbReference>
<dbReference type="FunFam" id="3.20.20.140:FF:000016">
    <property type="entry name" value="Adenine deaminase"/>
    <property type="match status" value="1"/>
</dbReference>
<dbReference type="Gene3D" id="3.20.20.140">
    <property type="entry name" value="Metal-dependent hydrolases"/>
    <property type="match status" value="1"/>
</dbReference>
<dbReference type="Gene3D" id="2.30.40.10">
    <property type="entry name" value="Urease, subunit C, domain 1"/>
    <property type="match status" value="1"/>
</dbReference>
<dbReference type="HAMAP" id="MF_01518">
    <property type="entry name" value="Adenine_deamin"/>
    <property type="match status" value="1"/>
</dbReference>
<dbReference type="InterPro" id="IPR006679">
    <property type="entry name" value="Adenine_deam"/>
</dbReference>
<dbReference type="InterPro" id="IPR026912">
    <property type="entry name" value="Adenine_deam_C"/>
</dbReference>
<dbReference type="InterPro" id="IPR006680">
    <property type="entry name" value="Amidohydro-rel"/>
</dbReference>
<dbReference type="InterPro" id="IPR011059">
    <property type="entry name" value="Metal-dep_hydrolase_composite"/>
</dbReference>
<dbReference type="InterPro" id="IPR032466">
    <property type="entry name" value="Metal_Hydrolase"/>
</dbReference>
<dbReference type="NCBIfam" id="TIGR01178">
    <property type="entry name" value="ade"/>
    <property type="match status" value="1"/>
</dbReference>
<dbReference type="PANTHER" id="PTHR11113:SF2">
    <property type="entry name" value="ADENINE DEAMINASE"/>
    <property type="match status" value="1"/>
</dbReference>
<dbReference type="PANTHER" id="PTHR11113">
    <property type="entry name" value="N-ACETYLGLUCOSAMINE-6-PHOSPHATE DEACETYLASE"/>
    <property type="match status" value="1"/>
</dbReference>
<dbReference type="Pfam" id="PF13382">
    <property type="entry name" value="Adenine_deam_C"/>
    <property type="match status" value="1"/>
</dbReference>
<dbReference type="Pfam" id="PF01979">
    <property type="entry name" value="Amidohydro_1"/>
    <property type="match status" value="1"/>
</dbReference>
<dbReference type="SUPFAM" id="SSF51338">
    <property type="entry name" value="Composite domain of metallo-dependent hydrolases"/>
    <property type="match status" value="1"/>
</dbReference>
<dbReference type="SUPFAM" id="SSF51556">
    <property type="entry name" value="Metallo-dependent hydrolases"/>
    <property type="match status" value="1"/>
</dbReference>
<sequence length="577" mass="62496">MNKETLAERLNASAGRQKADTVIKNGKIMDVFNQEWISADIAITGGVIVGLGEYEGEEVIDAEGQMIVPGFIDGHVHIESSMVTPIEFAKAVLPHGVTTVITDPHEIANVSGAKGISFMIEQAKKAPLNIRFMLPSCVPAASFERSGAVLKAEDLKPFYQEKEVLGLAEVMDYVSVAEGEEDMLQKLLDAKRHGKRIDGHLAGLSSDIINIYRTAMVSNDHEVTTKEEALDRIRRGMYVMLREGSVAKNTLNVLPAVNEKNARRFFFCTDDKHVDDLLSEGSVNHQVKMAIKAGLDPFLAYQLASLNAAECYGLETKGAVAPGFDADLLFISDVREAVVTKTMVAGRTVAENGRTVYEQSAGSYSPDQALLDTVRLKAPLTESDFHIPIQEGKKMNVIEMIPNHLETRKKEVPAPSADAFCPDTENDLLKIAVAERHSGEKMIGLGIVQGFGLKEGAIATTISHDSHNIIAVGTNDADLAKAINRLRDTGGGLTAVKNGELLHSVPLPIAGLLSDKSAEWVNDSLGVLHEKLPLLGFTGDFNPFLTLSFLALPVIPDIKMTAAGLFDVKAFQHIPLQ</sequence>
<keyword id="KW-0378">Hydrolase</keyword>
<keyword id="KW-0464">Manganese</keyword>
<feature type="chain" id="PRO_1000068607" description="Adenine deaminase">
    <location>
        <begin position="1"/>
        <end position="577"/>
    </location>
</feature>